<feature type="chain" id="PRO_1000097900" description="Elongation factor P--(R)-beta-lysine ligase">
    <location>
        <begin position="1"/>
        <end position="325"/>
    </location>
</feature>
<feature type="binding site" evidence="1">
    <location>
        <begin position="76"/>
        <end position="78"/>
    </location>
    <ligand>
        <name>substrate</name>
    </ligand>
</feature>
<feature type="binding site" evidence="1">
    <location>
        <begin position="100"/>
        <end position="102"/>
    </location>
    <ligand>
        <name>ATP</name>
        <dbReference type="ChEBI" id="CHEBI:30616"/>
    </ligand>
</feature>
<feature type="binding site" evidence="1">
    <location>
        <position position="109"/>
    </location>
    <ligand>
        <name>ATP</name>
        <dbReference type="ChEBI" id="CHEBI:30616"/>
    </ligand>
</feature>
<feature type="binding site" evidence="1">
    <location>
        <position position="118"/>
    </location>
    <ligand>
        <name>substrate</name>
    </ligand>
</feature>
<feature type="binding site" evidence="1">
    <location>
        <begin position="244"/>
        <end position="245"/>
    </location>
    <ligand>
        <name>ATP</name>
        <dbReference type="ChEBI" id="CHEBI:30616"/>
    </ligand>
</feature>
<feature type="binding site" evidence="1">
    <location>
        <position position="251"/>
    </location>
    <ligand>
        <name>substrate</name>
    </ligand>
</feature>
<feature type="binding site" evidence="1">
    <location>
        <position position="300"/>
    </location>
    <ligand>
        <name>ATP</name>
        <dbReference type="ChEBI" id="CHEBI:30616"/>
    </ligand>
</feature>
<sequence>MSETASWQPSASIPNLLKRAAIMAEIRRFFADRGVLEVETPCMSQATVTDIHLVPFETRFVGPGHSQGMNLWLMTSPEYHMKRLLVAGCGPVFQLCRSFRNEEMGRYHNPEFTMLEWYRPHYDMYRLMNEVDDLLQQVLDCPAAESLSYQQAFLRYLEIDPLSADKTQLREVAAKLDLSNVADTEEDRDTLLQLLFTFGVEPNIGKEKPTFVYHFPASQASLAQISTEDHRVAERFEVYYKGIELANGFHELTDAREQQQRFEQDNRKRAARGLPQHPIDQNLIEALKVGMPDCSGVALGVDRLVMLALGAETLAEVIAFSVDRA</sequence>
<protein>
    <recommendedName>
        <fullName evidence="1">Elongation factor P--(R)-beta-lysine ligase</fullName>
        <shortName evidence="1">EF-P--(R)-beta-lysine ligase</shortName>
        <ecNumber evidence="1">6.3.2.-</ecNumber>
    </recommendedName>
    <alternativeName>
        <fullName evidence="1">EF-P post-translational modification enzyme A</fullName>
    </alternativeName>
    <alternativeName>
        <fullName evidence="1">EF-P-lysine lysyltransferase</fullName>
    </alternativeName>
</protein>
<dbReference type="EC" id="6.3.2.-" evidence="1"/>
<dbReference type="EMBL" id="AP009240">
    <property type="protein sequence ID" value="BAG79981.1"/>
    <property type="molecule type" value="Genomic_DNA"/>
</dbReference>
<dbReference type="RefSeq" id="WP_000004771.1">
    <property type="nucleotide sequence ID" value="NC_011415.1"/>
</dbReference>
<dbReference type="SMR" id="B6I264"/>
<dbReference type="GeneID" id="93777667"/>
<dbReference type="KEGG" id="ecy:ECSE_4457"/>
<dbReference type="HOGENOM" id="CLU_008255_1_1_6"/>
<dbReference type="Proteomes" id="UP000008199">
    <property type="component" value="Chromosome"/>
</dbReference>
<dbReference type="GO" id="GO:0005829">
    <property type="term" value="C:cytosol"/>
    <property type="evidence" value="ECO:0007669"/>
    <property type="project" value="TreeGrafter"/>
</dbReference>
<dbReference type="GO" id="GO:0016880">
    <property type="term" value="F:acid-ammonia (or amide) ligase activity"/>
    <property type="evidence" value="ECO:0007669"/>
    <property type="project" value="UniProtKB-UniRule"/>
</dbReference>
<dbReference type="GO" id="GO:0005524">
    <property type="term" value="F:ATP binding"/>
    <property type="evidence" value="ECO:0007669"/>
    <property type="project" value="UniProtKB-UniRule"/>
</dbReference>
<dbReference type="GO" id="GO:0004824">
    <property type="term" value="F:lysine-tRNA ligase activity"/>
    <property type="evidence" value="ECO:0007669"/>
    <property type="project" value="InterPro"/>
</dbReference>
<dbReference type="GO" id="GO:0000049">
    <property type="term" value="F:tRNA binding"/>
    <property type="evidence" value="ECO:0007669"/>
    <property type="project" value="TreeGrafter"/>
</dbReference>
<dbReference type="GO" id="GO:0006430">
    <property type="term" value="P:lysyl-tRNA aminoacylation"/>
    <property type="evidence" value="ECO:0007669"/>
    <property type="project" value="InterPro"/>
</dbReference>
<dbReference type="FunFam" id="3.30.930.10:FF:000017">
    <property type="entry name" value="Elongation factor P--(R)-beta-lysine ligase"/>
    <property type="match status" value="1"/>
</dbReference>
<dbReference type="Gene3D" id="3.30.930.10">
    <property type="entry name" value="Bira Bifunctional Protein, Domain 2"/>
    <property type="match status" value="1"/>
</dbReference>
<dbReference type="HAMAP" id="MF_00174">
    <property type="entry name" value="EF_P_modif_A"/>
    <property type="match status" value="1"/>
</dbReference>
<dbReference type="InterPro" id="IPR004364">
    <property type="entry name" value="Aa-tRNA-synt_II"/>
</dbReference>
<dbReference type="InterPro" id="IPR006195">
    <property type="entry name" value="aa-tRNA-synth_II"/>
</dbReference>
<dbReference type="InterPro" id="IPR045864">
    <property type="entry name" value="aa-tRNA-synth_II/BPL/LPL"/>
</dbReference>
<dbReference type="InterPro" id="IPR004525">
    <property type="entry name" value="EpmA"/>
</dbReference>
<dbReference type="InterPro" id="IPR018149">
    <property type="entry name" value="Lys-tRNA-synth_II_C"/>
</dbReference>
<dbReference type="NCBIfam" id="TIGR00462">
    <property type="entry name" value="genX"/>
    <property type="match status" value="1"/>
</dbReference>
<dbReference type="NCBIfam" id="NF006828">
    <property type="entry name" value="PRK09350.1"/>
    <property type="match status" value="1"/>
</dbReference>
<dbReference type="PANTHER" id="PTHR42918:SF6">
    <property type="entry name" value="ELONGATION FACTOR P--(R)-BETA-LYSINE LIGASE"/>
    <property type="match status" value="1"/>
</dbReference>
<dbReference type="PANTHER" id="PTHR42918">
    <property type="entry name" value="LYSYL-TRNA SYNTHETASE"/>
    <property type="match status" value="1"/>
</dbReference>
<dbReference type="Pfam" id="PF00152">
    <property type="entry name" value="tRNA-synt_2"/>
    <property type="match status" value="1"/>
</dbReference>
<dbReference type="PRINTS" id="PR00982">
    <property type="entry name" value="TRNASYNTHLYS"/>
</dbReference>
<dbReference type="SUPFAM" id="SSF55681">
    <property type="entry name" value="Class II aaRS and biotin synthetases"/>
    <property type="match status" value="1"/>
</dbReference>
<dbReference type="PROSITE" id="PS50862">
    <property type="entry name" value="AA_TRNA_LIGASE_II"/>
    <property type="match status" value="1"/>
</dbReference>
<name>EPMA_ECOSE</name>
<comment type="function">
    <text evidence="1">With EpmB is involved in the beta-lysylation step of the post-translational modification of translation elongation factor P (EF-P) on 'Lys-34'. Catalyzes the ATP-dependent activation of (R)-beta-lysine produced by EpmB, forming a lysyl-adenylate, from which the beta-lysyl moiety is then transferred to the epsilon-amino group of EF-P 'Lys-34'.</text>
</comment>
<comment type="catalytic activity">
    <reaction evidence="1">
        <text>D-beta-lysine + L-lysyl-[protein] + ATP = N(6)-((3R)-3,6-diaminohexanoyl)-L-lysyl-[protein] + AMP + diphosphate + H(+)</text>
        <dbReference type="Rhea" id="RHEA:83435"/>
        <dbReference type="Rhea" id="RHEA-COMP:9752"/>
        <dbReference type="Rhea" id="RHEA-COMP:20131"/>
        <dbReference type="ChEBI" id="CHEBI:15378"/>
        <dbReference type="ChEBI" id="CHEBI:29969"/>
        <dbReference type="ChEBI" id="CHEBI:30616"/>
        <dbReference type="ChEBI" id="CHEBI:33019"/>
        <dbReference type="ChEBI" id="CHEBI:84138"/>
        <dbReference type="ChEBI" id="CHEBI:156053"/>
        <dbReference type="ChEBI" id="CHEBI:456215"/>
    </reaction>
    <physiologicalReaction direction="left-to-right" evidence="1">
        <dbReference type="Rhea" id="RHEA:83436"/>
    </physiologicalReaction>
</comment>
<comment type="subunit">
    <text evidence="1">Homodimer.</text>
</comment>
<comment type="similarity">
    <text evidence="1">Belongs to the class-II aminoacyl-tRNA synthetase family. EpmA subfamily.</text>
</comment>
<gene>
    <name evidence="1" type="primary">epmA</name>
    <name type="synonym">yjeA</name>
    <name type="ordered locus">ECSE_4457</name>
</gene>
<accession>B6I264</accession>
<keyword id="KW-0067">ATP-binding</keyword>
<keyword id="KW-0436">Ligase</keyword>
<keyword id="KW-0547">Nucleotide-binding</keyword>
<evidence type="ECO:0000255" key="1">
    <source>
        <dbReference type="HAMAP-Rule" id="MF_00174"/>
    </source>
</evidence>
<organism>
    <name type="scientific">Escherichia coli (strain SE11)</name>
    <dbReference type="NCBI Taxonomy" id="409438"/>
    <lineage>
        <taxon>Bacteria</taxon>
        <taxon>Pseudomonadati</taxon>
        <taxon>Pseudomonadota</taxon>
        <taxon>Gammaproteobacteria</taxon>
        <taxon>Enterobacterales</taxon>
        <taxon>Enterobacteriaceae</taxon>
        <taxon>Escherichia</taxon>
    </lineage>
</organism>
<reference key="1">
    <citation type="journal article" date="2008" name="DNA Res.">
        <title>Complete genome sequence and comparative analysis of the wild-type commensal Escherichia coli strain SE11 isolated from a healthy adult.</title>
        <authorList>
            <person name="Oshima K."/>
            <person name="Toh H."/>
            <person name="Ogura Y."/>
            <person name="Sasamoto H."/>
            <person name="Morita H."/>
            <person name="Park S.-H."/>
            <person name="Ooka T."/>
            <person name="Iyoda S."/>
            <person name="Taylor T.D."/>
            <person name="Hayashi T."/>
            <person name="Itoh K."/>
            <person name="Hattori M."/>
        </authorList>
    </citation>
    <scope>NUCLEOTIDE SEQUENCE [LARGE SCALE GENOMIC DNA]</scope>
    <source>
        <strain>SE11</strain>
    </source>
</reference>
<proteinExistence type="inferred from homology"/>